<accession>Q1MPU2</accession>
<comment type="function">
    <text evidence="1">Forms part of the ribosomal stalk, playing a central role in the interaction of the ribosome with GTP-bound translation factors.</text>
</comment>
<comment type="subunit">
    <text evidence="1">Part of the ribosomal stalk of the 50S ribosomal subunit. The N-terminus interacts with L11 and the large rRNA to form the base of the stalk. The C-terminus forms an elongated spine to which L12 dimers bind in a sequential fashion forming a multimeric L10(L12)X complex.</text>
</comment>
<comment type="similarity">
    <text evidence="1">Belongs to the universal ribosomal protein uL10 family.</text>
</comment>
<protein>
    <recommendedName>
        <fullName evidence="1">Large ribosomal subunit protein uL10</fullName>
    </recommendedName>
    <alternativeName>
        <fullName evidence="2">50S ribosomal protein L10</fullName>
    </alternativeName>
</protein>
<dbReference type="EMBL" id="AM180252">
    <property type="protein sequence ID" value="CAJ54985.1"/>
    <property type="molecule type" value="Genomic_DNA"/>
</dbReference>
<dbReference type="RefSeq" id="WP_011527014.1">
    <property type="nucleotide sequence ID" value="NC_008011.1"/>
</dbReference>
<dbReference type="SMR" id="Q1MPU2"/>
<dbReference type="STRING" id="363253.LI0931"/>
<dbReference type="KEGG" id="lip:LI0931"/>
<dbReference type="eggNOG" id="COG0244">
    <property type="taxonomic scope" value="Bacteria"/>
</dbReference>
<dbReference type="HOGENOM" id="CLU_092227_1_2_7"/>
<dbReference type="OrthoDB" id="3186107at2"/>
<dbReference type="Proteomes" id="UP000002430">
    <property type="component" value="Chromosome"/>
</dbReference>
<dbReference type="GO" id="GO:0015934">
    <property type="term" value="C:large ribosomal subunit"/>
    <property type="evidence" value="ECO:0007669"/>
    <property type="project" value="InterPro"/>
</dbReference>
<dbReference type="GO" id="GO:0070180">
    <property type="term" value="F:large ribosomal subunit rRNA binding"/>
    <property type="evidence" value="ECO:0007669"/>
    <property type="project" value="UniProtKB-UniRule"/>
</dbReference>
<dbReference type="GO" id="GO:0003735">
    <property type="term" value="F:structural constituent of ribosome"/>
    <property type="evidence" value="ECO:0007669"/>
    <property type="project" value="InterPro"/>
</dbReference>
<dbReference type="GO" id="GO:0006412">
    <property type="term" value="P:translation"/>
    <property type="evidence" value="ECO:0007669"/>
    <property type="project" value="UniProtKB-UniRule"/>
</dbReference>
<dbReference type="CDD" id="cd05797">
    <property type="entry name" value="Ribosomal_L10"/>
    <property type="match status" value="1"/>
</dbReference>
<dbReference type="Gene3D" id="3.30.70.1730">
    <property type="match status" value="1"/>
</dbReference>
<dbReference type="Gene3D" id="6.10.250.290">
    <property type="match status" value="1"/>
</dbReference>
<dbReference type="HAMAP" id="MF_00362">
    <property type="entry name" value="Ribosomal_uL10"/>
    <property type="match status" value="1"/>
</dbReference>
<dbReference type="InterPro" id="IPR001790">
    <property type="entry name" value="Ribosomal_uL10"/>
</dbReference>
<dbReference type="InterPro" id="IPR043141">
    <property type="entry name" value="Ribosomal_uL10-like_sf"/>
</dbReference>
<dbReference type="InterPro" id="IPR022973">
    <property type="entry name" value="Ribosomal_uL10_bac"/>
</dbReference>
<dbReference type="InterPro" id="IPR047865">
    <property type="entry name" value="Ribosomal_uL10_bac_type"/>
</dbReference>
<dbReference type="InterPro" id="IPR002363">
    <property type="entry name" value="Ribosomal_uL10_CS_bac"/>
</dbReference>
<dbReference type="NCBIfam" id="NF000955">
    <property type="entry name" value="PRK00099.1-1"/>
    <property type="match status" value="1"/>
</dbReference>
<dbReference type="PANTHER" id="PTHR11560">
    <property type="entry name" value="39S RIBOSOMAL PROTEIN L10, MITOCHONDRIAL"/>
    <property type="match status" value="1"/>
</dbReference>
<dbReference type="Pfam" id="PF00466">
    <property type="entry name" value="Ribosomal_L10"/>
    <property type="match status" value="1"/>
</dbReference>
<dbReference type="SUPFAM" id="SSF160369">
    <property type="entry name" value="Ribosomal protein L10-like"/>
    <property type="match status" value="1"/>
</dbReference>
<dbReference type="PROSITE" id="PS01109">
    <property type="entry name" value="RIBOSOMAL_L10"/>
    <property type="match status" value="1"/>
</dbReference>
<organism>
    <name type="scientific">Lawsonia intracellularis (strain PHE/MN1-00)</name>
    <dbReference type="NCBI Taxonomy" id="363253"/>
    <lineage>
        <taxon>Bacteria</taxon>
        <taxon>Pseudomonadati</taxon>
        <taxon>Thermodesulfobacteriota</taxon>
        <taxon>Desulfovibrionia</taxon>
        <taxon>Desulfovibrionales</taxon>
        <taxon>Desulfovibrionaceae</taxon>
        <taxon>Lawsonia</taxon>
    </lineage>
</organism>
<evidence type="ECO:0000255" key="1">
    <source>
        <dbReference type="HAMAP-Rule" id="MF_00362"/>
    </source>
</evidence>
<evidence type="ECO:0000305" key="2"/>
<gene>
    <name evidence="1" type="primary">rplJ</name>
    <name type="ordered locus">LI0931</name>
</gene>
<keyword id="KW-1185">Reference proteome</keyword>
<keyword id="KW-0687">Ribonucleoprotein</keyword>
<keyword id="KW-0689">Ribosomal protein</keyword>
<keyword id="KW-0694">RNA-binding</keyword>
<keyword id="KW-0699">rRNA-binding</keyword>
<proteinExistence type="inferred from homology"/>
<reference key="1">
    <citation type="submission" date="2005-11" db="EMBL/GenBank/DDBJ databases">
        <title>The complete genome sequence of Lawsonia intracellularis: the causative agent of proliferative enteropathy.</title>
        <authorList>
            <person name="Kaur K."/>
            <person name="Zhang Q."/>
            <person name="Beckler D."/>
            <person name="Munir S."/>
            <person name="Li L."/>
            <person name="Kinsley K."/>
            <person name="Herron L."/>
            <person name="Peterson A."/>
            <person name="May B."/>
            <person name="Singh S."/>
            <person name="Gebhart C."/>
            <person name="Kapur V."/>
        </authorList>
    </citation>
    <scope>NUCLEOTIDE SEQUENCE [LARGE SCALE GENOMIC DNA]</scope>
    <source>
        <strain>PHE/MN1-00</strain>
    </source>
</reference>
<name>RL10_LAWIP</name>
<sequence>MNRSEKAALISQIKAKADTASFVVVTDFKGISVEELTCLRAKLRESGGEYLVVKNTLARIAFTDGIHSIIKDQFKDNCAIAFGYNEPVAIAKTINDFVKTSKFITVRHGSLEGTLLTTKDIEDLAKLPSKPELIAQTLGTLNAVPTNFVSLFANIIRPLFYALQAIEAKKAA</sequence>
<feature type="chain" id="PRO_1000005523" description="Large ribosomal subunit protein uL10">
    <location>
        <begin position="1"/>
        <end position="172"/>
    </location>
</feature>